<accession>Q5HGV6</accession>
<protein>
    <recommendedName>
        <fullName evidence="1">Large ribosomal subunit protein bL32</fullName>
    </recommendedName>
    <alternativeName>
        <fullName evidence="2">50S ribosomal protein L32</fullName>
    </alternativeName>
</protein>
<gene>
    <name evidence="1" type="primary">rpmF</name>
    <name type="ordered locus">SACOL1137</name>
</gene>
<feature type="chain" id="PRO_0000172402" description="Large ribosomal subunit protein bL32">
    <location>
        <begin position="1"/>
        <end position="57"/>
    </location>
</feature>
<dbReference type="EMBL" id="CP000046">
    <property type="protein sequence ID" value="AAW38017.1"/>
    <property type="molecule type" value="Genomic_DNA"/>
</dbReference>
<dbReference type="RefSeq" id="WP_000290472.1">
    <property type="nucleotide sequence ID" value="NZ_JBGOFO010000002.1"/>
</dbReference>
<dbReference type="SMR" id="Q5HGV6"/>
<dbReference type="GeneID" id="98345444"/>
<dbReference type="KEGG" id="sac:SACOL1137"/>
<dbReference type="HOGENOM" id="CLU_129084_1_3_9"/>
<dbReference type="Proteomes" id="UP000000530">
    <property type="component" value="Chromosome"/>
</dbReference>
<dbReference type="GO" id="GO:0015934">
    <property type="term" value="C:large ribosomal subunit"/>
    <property type="evidence" value="ECO:0007669"/>
    <property type="project" value="InterPro"/>
</dbReference>
<dbReference type="GO" id="GO:0003735">
    <property type="term" value="F:structural constituent of ribosome"/>
    <property type="evidence" value="ECO:0007669"/>
    <property type="project" value="InterPro"/>
</dbReference>
<dbReference type="GO" id="GO:0006412">
    <property type="term" value="P:translation"/>
    <property type="evidence" value="ECO:0007669"/>
    <property type="project" value="UniProtKB-UniRule"/>
</dbReference>
<dbReference type="Gene3D" id="1.20.5.640">
    <property type="entry name" value="Single helix bin"/>
    <property type="match status" value="1"/>
</dbReference>
<dbReference type="HAMAP" id="MF_00340">
    <property type="entry name" value="Ribosomal_bL32"/>
    <property type="match status" value="1"/>
</dbReference>
<dbReference type="InterPro" id="IPR002677">
    <property type="entry name" value="Ribosomal_bL32"/>
</dbReference>
<dbReference type="InterPro" id="IPR044957">
    <property type="entry name" value="Ribosomal_bL32_bact"/>
</dbReference>
<dbReference type="InterPro" id="IPR011332">
    <property type="entry name" value="Ribosomal_zn-bd"/>
</dbReference>
<dbReference type="NCBIfam" id="TIGR01031">
    <property type="entry name" value="rpmF_bact"/>
    <property type="match status" value="1"/>
</dbReference>
<dbReference type="PANTHER" id="PTHR35534">
    <property type="entry name" value="50S RIBOSOMAL PROTEIN L32"/>
    <property type="match status" value="1"/>
</dbReference>
<dbReference type="PANTHER" id="PTHR35534:SF2">
    <property type="entry name" value="LARGE RIBOSOMAL SUBUNIT PROTEIN BL32"/>
    <property type="match status" value="1"/>
</dbReference>
<dbReference type="Pfam" id="PF01783">
    <property type="entry name" value="Ribosomal_L32p"/>
    <property type="match status" value="1"/>
</dbReference>
<dbReference type="SUPFAM" id="SSF57829">
    <property type="entry name" value="Zn-binding ribosomal proteins"/>
    <property type="match status" value="1"/>
</dbReference>
<keyword id="KW-0687">Ribonucleoprotein</keyword>
<keyword id="KW-0689">Ribosomal protein</keyword>
<proteinExistence type="inferred from homology"/>
<name>RL32_STAAC</name>
<sequence length="57" mass="6485">MAVPKRRTSKTRKNKRRTHFKISVPGMTECPNCGEYKLSHRVCKNCGSYNGEEVAAK</sequence>
<organism>
    <name type="scientific">Staphylococcus aureus (strain COL)</name>
    <dbReference type="NCBI Taxonomy" id="93062"/>
    <lineage>
        <taxon>Bacteria</taxon>
        <taxon>Bacillati</taxon>
        <taxon>Bacillota</taxon>
        <taxon>Bacilli</taxon>
        <taxon>Bacillales</taxon>
        <taxon>Staphylococcaceae</taxon>
        <taxon>Staphylococcus</taxon>
    </lineage>
</organism>
<reference key="1">
    <citation type="journal article" date="2005" name="J. Bacteriol.">
        <title>Insights on evolution of virulence and resistance from the complete genome analysis of an early methicillin-resistant Staphylococcus aureus strain and a biofilm-producing methicillin-resistant Staphylococcus epidermidis strain.</title>
        <authorList>
            <person name="Gill S.R."/>
            <person name="Fouts D.E."/>
            <person name="Archer G.L."/>
            <person name="Mongodin E.F."/>
            <person name="DeBoy R.T."/>
            <person name="Ravel J."/>
            <person name="Paulsen I.T."/>
            <person name="Kolonay J.F."/>
            <person name="Brinkac L.M."/>
            <person name="Beanan M.J."/>
            <person name="Dodson R.J."/>
            <person name="Daugherty S.C."/>
            <person name="Madupu R."/>
            <person name="Angiuoli S.V."/>
            <person name="Durkin A.S."/>
            <person name="Haft D.H."/>
            <person name="Vamathevan J.J."/>
            <person name="Khouri H."/>
            <person name="Utterback T.R."/>
            <person name="Lee C."/>
            <person name="Dimitrov G."/>
            <person name="Jiang L."/>
            <person name="Qin H."/>
            <person name="Weidman J."/>
            <person name="Tran K."/>
            <person name="Kang K.H."/>
            <person name="Hance I.R."/>
            <person name="Nelson K.E."/>
            <person name="Fraser C.M."/>
        </authorList>
    </citation>
    <scope>NUCLEOTIDE SEQUENCE [LARGE SCALE GENOMIC DNA]</scope>
    <source>
        <strain>COL</strain>
    </source>
</reference>
<evidence type="ECO:0000255" key="1">
    <source>
        <dbReference type="HAMAP-Rule" id="MF_00340"/>
    </source>
</evidence>
<evidence type="ECO:0000305" key="2"/>
<comment type="similarity">
    <text evidence="1">Belongs to the bacterial ribosomal protein bL32 family.</text>
</comment>